<comment type="function">
    <text evidence="1">Cell division protein that is required for growth during stress conditions. May be involved in protecting or stabilizing the divisomal assembly under conditions of stress.</text>
</comment>
<comment type="subcellular location">
    <subcellularLocation>
        <location evidence="1">Periplasm</location>
    </subcellularLocation>
    <text evidence="1">Localizes to the division septum.</text>
</comment>
<comment type="PTM">
    <text>Predicted to be exported by the Tat system. The position of the signal peptide cleavage has not been experimentally proven.</text>
</comment>
<comment type="similarity">
    <text evidence="1">Belongs to the FtsP family.</text>
</comment>
<gene>
    <name evidence="1" type="primary">ftsP</name>
    <name type="ordered locus">NT05HA_0118</name>
</gene>
<protein>
    <recommendedName>
        <fullName evidence="1">Cell division protein FtsP</fullName>
    </recommendedName>
</protein>
<keyword id="KW-0131">Cell cycle</keyword>
<keyword id="KW-0132">Cell division</keyword>
<keyword id="KW-0574">Periplasm</keyword>
<keyword id="KW-0732">Signal</keyword>
<evidence type="ECO:0000255" key="1">
    <source>
        <dbReference type="HAMAP-Rule" id="MF_00915"/>
    </source>
</evidence>
<reference key="1">
    <citation type="journal article" date="2009" name="J. Bacteriol.">
        <title>Complete genome sequence of Aggregatibacter (Haemophilus) aphrophilus NJ8700.</title>
        <authorList>
            <person name="Di Bonaventura M.P."/>
            <person name="DeSalle R."/>
            <person name="Pop M."/>
            <person name="Nagarajan N."/>
            <person name="Figurski D.H."/>
            <person name="Fine D.H."/>
            <person name="Kaplan J.B."/>
            <person name="Planet P.J."/>
        </authorList>
    </citation>
    <scope>NUCLEOTIDE SEQUENCE [LARGE SCALE GENOMIC DNA]</scope>
    <source>
        <strain>NJ8700</strain>
    </source>
</reference>
<organism>
    <name type="scientific">Aggregatibacter aphrophilus (strain NJ8700)</name>
    <name type="common">Haemophilus aphrophilus</name>
    <dbReference type="NCBI Taxonomy" id="634176"/>
    <lineage>
        <taxon>Bacteria</taxon>
        <taxon>Pseudomonadati</taxon>
        <taxon>Pseudomonadota</taxon>
        <taxon>Gammaproteobacteria</taxon>
        <taxon>Pasteurellales</taxon>
        <taxon>Pasteurellaceae</taxon>
        <taxon>Aggregatibacter</taxon>
    </lineage>
</organism>
<dbReference type="EMBL" id="CP001607">
    <property type="protein sequence ID" value="ACS96560.1"/>
    <property type="molecule type" value="Genomic_DNA"/>
</dbReference>
<dbReference type="RefSeq" id="WP_005704339.1">
    <property type="nucleotide sequence ID" value="NZ_CP009230.1"/>
</dbReference>
<dbReference type="SMR" id="C6AK71"/>
<dbReference type="KEGG" id="aap:NT05HA_0118"/>
<dbReference type="PATRIC" id="fig|634176.19.peg.111"/>
<dbReference type="HOGENOM" id="CLU_009100_2_4_6"/>
<dbReference type="GO" id="GO:0032153">
    <property type="term" value="C:cell division site"/>
    <property type="evidence" value="ECO:0007669"/>
    <property type="project" value="UniProtKB-UniRule"/>
</dbReference>
<dbReference type="GO" id="GO:0030288">
    <property type="term" value="C:outer membrane-bounded periplasmic space"/>
    <property type="evidence" value="ECO:0007669"/>
    <property type="project" value="UniProtKB-UniRule"/>
</dbReference>
<dbReference type="GO" id="GO:0005507">
    <property type="term" value="F:copper ion binding"/>
    <property type="evidence" value="ECO:0007669"/>
    <property type="project" value="InterPro"/>
</dbReference>
<dbReference type="GO" id="GO:0043093">
    <property type="term" value="P:FtsZ-dependent cytokinesis"/>
    <property type="evidence" value="ECO:0007669"/>
    <property type="project" value="UniProtKB-UniRule"/>
</dbReference>
<dbReference type="CDD" id="cd13867">
    <property type="entry name" value="CuRO_2_CueO_FtsP"/>
    <property type="match status" value="1"/>
</dbReference>
<dbReference type="Gene3D" id="2.60.40.420">
    <property type="entry name" value="Cupredoxins - blue copper proteins"/>
    <property type="match status" value="3"/>
</dbReference>
<dbReference type="HAMAP" id="MF_00915">
    <property type="entry name" value="FtsP"/>
    <property type="match status" value="1"/>
</dbReference>
<dbReference type="InterPro" id="IPR011707">
    <property type="entry name" value="Cu-oxidase-like_N"/>
</dbReference>
<dbReference type="InterPro" id="IPR045087">
    <property type="entry name" value="Cu-oxidase_fam"/>
</dbReference>
<dbReference type="InterPro" id="IPR008972">
    <property type="entry name" value="Cupredoxin"/>
</dbReference>
<dbReference type="InterPro" id="IPR026589">
    <property type="entry name" value="FtsP"/>
</dbReference>
<dbReference type="InterPro" id="IPR006311">
    <property type="entry name" value="TAT_signal"/>
</dbReference>
<dbReference type="PANTHER" id="PTHR48267:SF1">
    <property type="entry name" value="BILIRUBIN OXIDASE"/>
    <property type="match status" value="1"/>
</dbReference>
<dbReference type="PANTHER" id="PTHR48267">
    <property type="entry name" value="CUPREDOXIN SUPERFAMILY PROTEIN"/>
    <property type="match status" value="1"/>
</dbReference>
<dbReference type="Pfam" id="PF07732">
    <property type="entry name" value="Cu-oxidase_3"/>
    <property type="match status" value="1"/>
</dbReference>
<dbReference type="SUPFAM" id="SSF49503">
    <property type="entry name" value="Cupredoxins"/>
    <property type="match status" value="3"/>
</dbReference>
<dbReference type="PROSITE" id="PS51318">
    <property type="entry name" value="TAT"/>
    <property type="match status" value="1"/>
</dbReference>
<sequence length="470" mass="52286">MKNCSRRQLLKTTLFSTALFSVPAPLLAATRPTLTIPPLFETRRGKPIFLNLQNTQASLLPGKRTEVWGFNGVYLGPTIKIKKDDFAKLNWKNNLPQFVAMNIQGLQASGELIGGIAKNLQKDETWAPIIPITQAPSTCWYHACTLANSAYQTYRGLLGLWMIEDKESTKLGLPQKYGVDDIPLILQDMQLNTEGTQLFQQHQGRFIGERLFVNGQEAPYLTVPRGLVRLRVLNASLSRTYELRFDDEREFTLIAQDLGFLPQGQKRNVVMLAPSERVEILVDLNDGENVSLITGTKRGILDNISHFFGSDGELIDNTILELRPEGLAGAFEKKEQTWQFNTDAPSLLSTKVQQERAFHIDVGNATINKNRLDPRRLDVSAKLGSVERWTLSASSPVGFAIRGAKFIVESVNGKALEASEIGWKDSVLINGKVSILVKFENTSSNNYPFTFGASDLMLADKGCIGLMLVQ</sequence>
<accession>C6AK71</accession>
<name>FTSP_AGGAN</name>
<proteinExistence type="inferred from homology"/>
<feature type="signal peptide" description="Tat-type signal" evidence="1">
    <location>
        <begin position="1"/>
        <end position="29"/>
    </location>
</feature>
<feature type="chain" id="PRO_0000416004" description="Cell division protein FtsP">
    <location>
        <begin position="30"/>
        <end position="470"/>
    </location>
</feature>